<dbReference type="EC" id="4.3.2.1" evidence="1"/>
<dbReference type="EMBL" id="BA000045">
    <property type="protein sequence ID" value="BAC88992.1"/>
    <property type="molecule type" value="Genomic_DNA"/>
</dbReference>
<dbReference type="RefSeq" id="NP_923997.1">
    <property type="nucleotide sequence ID" value="NC_005125.1"/>
</dbReference>
<dbReference type="RefSeq" id="WP_011141053.1">
    <property type="nucleotide sequence ID" value="NC_005125.1"/>
</dbReference>
<dbReference type="SMR" id="Q7NLS0"/>
<dbReference type="FunCoup" id="Q7NLS0">
    <property type="interactions" value="298"/>
</dbReference>
<dbReference type="STRING" id="251221.gene:10758529"/>
<dbReference type="EnsemblBacteria" id="BAC88992">
    <property type="protein sequence ID" value="BAC88992"/>
    <property type="gene ID" value="BAC88992"/>
</dbReference>
<dbReference type="KEGG" id="gvi:gll1051"/>
<dbReference type="PATRIC" id="fig|251221.4.peg.1077"/>
<dbReference type="eggNOG" id="COG0165">
    <property type="taxonomic scope" value="Bacteria"/>
</dbReference>
<dbReference type="HOGENOM" id="CLU_027272_2_3_3"/>
<dbReference type="InParanoid" id="Q7NLS0"/>
<dbReference type="OrthoDB" id="9769623at2"/>
<dbReference type="PhylomeDB" id="Q7NLS0"/>
<dbReference type="UniPathway" id="UPA00068">
    <property type="reaction ID" value="UER00114"/>
</dbReference>
<dbReference type="Proteomes" id="UP000000557">
    <property type="component" value="Chromosome"/>
</dbReference>
<dbReference type="GO" id="GO:0005829">
    <property type="term" value="C:cytosol"/>
    <property type="evidence" value="ECO:0000318"/>
    <property type="project" value="GO_Central"/>
</dbReference>
<dbReference type="GO" id="GO:0004056">
    <property type="term" value="F:argininosuccinate lyase activity"/>
    <property type="evidence" value="ECO:0000318"/>
    <property type="project" value="GO_Central"/>
</dbReference>
<dbReference type="GO" id="GO:0042450">
    <property type="term" value="P:arginine biosynthetic process via ornithine"/>
    <property type="evidence" value="ECO:0000318"/>
    <property type="project" value="GO_Central"/>
</dbReference>
<dbReference type="GO" id="GO:0006526">
    <property type="term" value="P:L-arginine biosynthetic process"/>
    <property type="evidence" value="ECO:0007669"/>
    <property type="project" value="UniProtKB-UniRule"/>
</dbReference>
<dbReference type="CDD" id="cd01359">
    <property type="entry name" value="Argininosuccinate_lyase"/>
    <property type="match status" value="1"/>
</dbReference>
<dbReference type="FunFam" id="1.10.275.10:FF:000002">
    <property type="entry name" value="Argininosuccinate lyase"/>
    <property type="match status" value="1"/>
</dbReference>
<dbReference type="FunFam" id="1.10.40.30:FF:000001">
    <property type="entry name" value="Argininosuccinate lyase"/>
    <property type="match status" value="1"/>
</dbReference>
<dbReference type="FunFam" id="1.20.200.10:FF:000015">
    <property type="entry name" value="argininosuccinate lyase isoform X2"/>
    <property type="match status" value="1"/>
</dbReference>
<dbReference type="Gene3D" id="1.10.40.30">
    <property type="entry name" value="Fumarase/aspartase (C-terminal domain)"/>
    <property type="match status" value="1"/>
</dbReference>
<dbReference type="Gene3D" id="1.20.200.10">
    <property type="entry name" value="Fumarase/aspartase (Central domain)"/>
    <property type="match status" value="1"/>
</dbReference>
<dbReference type="Gene3D" id="1.10.275.10">
    <property type="entry name" value="Fumarase/aspartase (N-terminal domain)"/>
    <property type="match status" value="1"/>
</dbReference>
<dbReference type="HAMAP" id="MF_00006">
    <property type="entry name" value="Arg_succ_lyase"/>
    <property type="match status" value="1"/>
</dbReference>
<dbReference type="InterPro" id="IPR029419">
    <property type="entry name" value="Arg_succ_lyase_C"/>
</dbReference>
<dbReference type="InterPro" id="IPR009049">
    <property type="entry name" value="Argininosuccinate_lyase"/>
</dbReference>
<dbReference type="InterPro" id="IPR024083">
    <property type="entry name" value="Fumarase/histidase_N"/>
</dbReference>
<dbReference type="InterPro" id="IPR020557">
    <property type="entry name" value="Fumarate_lyase_CS"/>
</dbReference>
<dbReference type="InterPro" id="IPR000362">
    <property type="entry name" value="Fumarate_lyase_fam"/>
</dbReference>
<dbReference type="InterPro" id="IPR022761">
    <property type="entry name" value="Fumarate_lyase_N"/>
</dbReference>
<dbReference type="InterPro" id="IPR008948">
    <property type="entry name" value="L-Aspartase-like"/>
</dbReference>
<dbReference type="NCBIfam" id="TIGR00838">
    <property type="entry name" value="argH"/>
    <property type="match status" value="1"/>
</dbReference>
<dbReference type="PANTHER" id="PTHR43814">
    <property type="entry name" value="ARGININOSUCCINATE LYASE"/>
    <property type="match status" value="1"/>
</dbReference>
<dbReference type="PANTHER" id="PTHR43814:SF1">
    <property type="entry name" value="ARGININOSUCCINATE LYASE"/>
    <property type="match status" value="1"/>
</dbReference>
<dbReference type="Pfam" id="PF14698">
    <property type="entry name" value="ASL_C2"/>
    <property type="match status" value="1"/>
</dbReference>
<dbReference type="Pfam" id="PF00206">
    <property type="entry name" value="Lyase_1"/>
    <property type="match status" value="1"/>
</dbReference>
<dbReference type="PRINTS" id="PR00145">
    <property type="entry name" value="ARGSUCLYASE"/>
</dbReference>
<dbReference type="PRINTS" id="PR00149">
    <property type="entry name" value="FUMRATELYASE"/>
</dbReference>
<dbReference type="SUPFAM" id="SSF48557">
    <property type="entry name" value="L-aspartase-like"/>
    <property type="match status" value="1"/>
</dbReference>
<dbReference type="PROSITE" id="PS00163">
    <property type="entry name" value="FUMARATE_LYASES"/>
    <property type="match status" value="1"/>
</dbReference>
<sequence>MTATPWSARFEAGLHPTVAAFNASIGFDIELIEYDLSGSAAHARMLAHSGILSEAEAEALVGGLEQIRSEWRTGQFRPGLEQEDVHYAVERRLVELVGEVGKKLHTARSRNDQVGTDLRLWLRERIDRIVGRLGVFQRTLLDLAACHVETLIPGYTHLQRAQPVSLAHHLLAYIEMGERDIERLTQIRERVNVCPLGSGALAGTVLPIDRHYTARLLGFVALSENSLDAVSDRDYVVEFLAAASLIAVHLSRLSEEIILWASQEFRFLTLTDRCATGSSLMPQKKNPDVPELVRGKTGRIFGHLMGMLTVLKGLPLAYNKDLQEDKEGIFDAARSVESSLEAMTILMAEGIVFQPDRLAGAVEEDFSNATDAADYLVRKGVPFREAYGVIGAVVKHCLKSNALLRDLPIAQWRHFHPAFDDDLYAAITPRTVVAARNSYGGTGFEQVRAALGRAEARWQGHFPSASAH</sequence>
<organism>
    <name type="scientific">Gloeobacter violaceus (strain ATCC 29082 / PCC 7421)</name>
    <dbReference type="NCBI Taxonomy" id="251221"/>
    <lineage>
        <taxon>Bacteria</taxon>
        <taxon>Bacillati</taxon>
        <taxon>Cyanobacteriota</taxon>
        <taxon>Cyanophyceae</taxon>
        <taxon>Gloeobacterales</taxon>
        <taxon>Gloeobacteraceae</taxon>
        <taxon>Gloeobacter</taxon>
    </lineage>
</organism>
<feature type="chain" id="PRO_0000137774" description="Argininosuccinate lyase">
    <location>
        <begin position="1"/>
        <end position="468"/>
    </location>
</feature>
<gene>
    <name evidence="1" type="primary">argH</name>
    <name type="ordered locus">gll1051</name>
</gene>
<reference key="1">
    <citation type="journal article" date="2003" name="DNA Res.">
        <title>Complete genome structure of Gloeobacter violaceus PCC 7421, a cyanobacterium that lacks thylakoids.</title>
        <authorList>
            <person name="Nakamura Y."/>
            <person name="Kaneko T."/>
            <person name="Sato S."/>
            <person name="Mimuro M."/>
            <person name="Miyashita H."/>
            <person name="Tsuchiya T."/>
            <person name="Sasamoto S."/>
            <person name="Watanabe A."/>
            <person name="Kawashima K."/>
            <person name="Kishida Y."/>
            <person name="Kiyokawa C."/>
            <person name="Kohara M."/>
            <person name="Matsumoto M."/>
            <person name="Matsuno A."/>
            <person name="Nakazaki N."/>
            <person name="Shimpo S."/>
            <person name="Takeuchi C."/>
            <person name="Yamada M."/>
            <person name="Tabata S."/>
        </authorList>
    </citation>
    <scope>NUCLEOTIDE SEQUENCE [LARGE SCALE GENOMIC DNA]</scope>
    <source>
        <strain>ATCC 29082 / PCC 7421</strain>
    </source>
</reference>
<name>ARLY_GLOVI</name>
<proteinExistence type="inferred from homology"/>
<comment type="catalytic activity">
    <reaction evidence="1">
        <text>2-(N(omega)-L-arginino)succinate = fumarate + L-arginine</text>
        <dbReference type="Rhea" id="RHEA:24020"/>
        <dbReference type="ChEBI" id="CHEBI:29806"/>
        <dbReference type="ChEBI" id="CHEBI:32682"/>
        <dbReference type="ChEBI" id="CHEBI:57472"/>
        <dbReference type="EC" id="4.3.2.1"/>
    </reaction>
</comment>
<comment type="pathway">
    <text evidence="1">Amino-acid biosynthesis; L-arginine biosynthesis; L-arginine from L-ornithine and carbamoyl phosphate: step 3/3.</text>
</comment>
<comment type="subcellular location">
    <subcellularLocation>
        <location evidence="1">Cytoplasm</location>
    </subcellularLocation>
</comment>
<comment type="similarity">
    <text evidence="1">Belongs to the lyase 1 family. Argininosuccinate lyase subfamily.</text>
</comment>
<accession>Q7NLS0</accession>
<keyword id="KW-0028">Amino-acid biosynthesis</keyword>
<keyword id="KW-0055">Arginine biosynthesis</keyword>
<keyword id="KW-0963">Cytoplasm</keyword>
<keyword id="KW-0456">Lyase</keyword>
<keyword id="KW-1185">Reference proteome</keyword>
<evidence type="ECO:0000255" key="1">
    <source>
        <dbReference type="HAMAP-Rule" id="MF_00006"/>
    </source>
</evidence>
<protein>
    <recommendedName>
        <fullName evidence="1">Argininosuccinate lyase</fullName>
        <shortName evidence="1">ASAL</shortName>
        <ecNumber evidence="1">4.3.2.1</ecNumber>
    </recommendedName>
    <alternativeName>
        <fullName evidence="1">Arginosuccinase</fullName>
    </alternativeName>
</protein>